<feature type="initiator methionine" description="Removed" evidence="2">
    <location>
        <position position="1"/>
    </location>
</feature>
<feature type="chain" id="PRO_0000271035" description="Kelch-like protein 31">
    <location>
        <begin position="2"/>
        <end position="634"/>
    </location>
</feature>
<feature type="domain" description="BTB" evidence="3">
    <location>
        <begin position="73"/>
        <end position="137"/>
    </location>
</feature>
<feature type="domain" description="BACK">
    <location>
        <begin position="172"/>
        <end position="273"/>
    </location>
</feature>
<feature type="repeat" description="Kelch 1">
    <location>
        <begin position="317"/>
        <end position="365"/>
    </location>
</feature>
<feature type="repeat" description="Kelch 2">
    <location>
        <begin position="366"/>
        <end position="419"/>
    </location>
</feature>
<feature type="repeat" description="Kelch 3">
    <location>
        <begin position="420"/>
        <end position="466"/>
    </location>
</feature>
<feature type="repeat" description="Kelch 4">
    <location>
        <begin position="468"/>
        <end position="513"/>
    </location>
</feature>
<feature type="repeat" description="Kelch 5">
    <location>
        <begin position="515"/>
        <end position="565"/>
    </location>
</feature>
<feature type="repeat" description="Kelch 6">
    <location>
        <begin position="567"/>
        <end position="614"/>
    </location>
</feature>
<feature type="modified residue" description="N,N,N-trimethylalanine" evidence="2">
    <location>
        <position position="2"/>
    </location>
</feature>
<feature type="sequence variant" id="VAR_050050" description="In dbSNP:rs6908377.">
    <original>N</original>
    <variation>S</variation>
    <location>
        <position position="11"/>
    </location>
</feature>
<feature type="sequence variant" id="VAR_050051" description="In dbSNP:rs3799260." evidence="5 7">
    <original>V</original>
    <variation>I</variation>
    <location>
        <position position="156"/>
    </location>
</feature>
<feature type="sequence variant" id="VAR_050052" description="In dbSNP:rs3799261.">
    <original>A</original>
    <variation>T</variation>
    <location>
        <position position="508"/>
    </location>
</feature>
<reference key="1">
    <citation type="journal article" date="2008" name="Mol. Cells">
        <title>A novel human BTB-kelch protein KLHL31, strongly expressed in muscle and heart, inhibits transcriptional activities of TRE and SRE.</title>
        <authorList>
            <person name="Yu W."/>
            <person name="Li Y."/>
            <person name="Zhou X."/>
            <person name="Deng Y."/>
            <person name="Wang Z."/>
            <person name="Yuan W."/>
            <person name="Li D."/>
            <person name="Zhu C."/>
            <person name="Zhao X."/>
            <person name="Mo X."/>
            <person name="Huang W."/>
            <person name="Luo N."/>
            <person name="Yan Y."/>
            <person name="Ocorr K."/>
            <person name="Bodmer R."/>
            <person name="Wang Y."/>
            <person name="Wu X."/>
        </authorList>
    </citation>
    <scope>NUCLEOTIDE SEQUENCE [MRNA]</scope>
    <scope>FUNCTION</scope>
    <scope>TISSUE SPECIFICITY</scope>
    <source>
        <tissue>Embryonic heart</tissue>
    </source>
</reference>
<reference key="2">
    <citation type="journal article" date="2003" name="Nature">
        <title>The DNA sequence and analysis of human chromosome 6.</title>
        <authorList>
            <person name="Mungall A.J."/>
            <person name="Palmer S.A."/>
            <person name="Sims S.K."/>
            <person name="Edwards C.A."/>
            <person name="Ashurst J.L."/>
            <person name="Wilming L."/>
            <person name="Jones M.C."/>
            <person name="Horton R."/>
            <person name="Hunt S.E."/>
            <person name="Scott C.E."/>
            <person name="Gilbert J.G.R."/>
            <person name="Clamp M.E."/>
            <person name="Bethel G."/>
            <person name="Milne S."/>
            <person name="Ainscough R."/>
            <person name="Almeida J.P."/>
            <person name="Ambrose K.D."/>
            <person name="Andrews T.D."/>
            <person name="Ashwell R.I.S."/>
            <person name="Babbage A.K."/>
            <person name="Bagguley C.L."/>
            <person name="Bailey J."/>
            <person name="Banerjee R."/>
            <person name="Barker D.J."/>
            <person name="Barlow K.F."/>
            <person name="Bates K."/>
            <person name="Beare D.M."/>
            <person name="Beasley H."/>
            <person name="Beasley O."/>
            <person name="Bird C.P."/>
            <person name="Blakey S.E."/>
            <person name="Bray-Allen S."/>
            <person name="Brook J."/>
            <person name="Brown A.J."/>
            <person name="Brown J.Y."/>
            <person name="Burford D.C."/>
            <person name="Burrill W."/>
            <person name="Burton J."/>
            <person name="Carder C."/>
            <person name="Carter N.P."/>
            <person name="Chapman J.C."/>
            <person name="Clark S.Y."/>
            <person name="Clark G."/>
            <person name="Clee C.M."/>
            <person name="Clegg S."/>
            <person name="Cobley V."/>
            <person name="Collier R.E."/>
            <person name="Collins J.E."/>
            <person name="Colman L.K."/>
            <person name="Corby N.R."/>
            <person name="Coville G.J."/>
            <person name="Culley K.M."/>
            <person name="Dhami P."/>
            <person name="Davies J."/>
            <person name="Dunn M."/>
            <person name="Earthrowl M.E."/>
            <person name="Ellington A.E."/>
            <person name="Evans K.A."/>
            <person name="Faulkner L."/>
            <person name="Francis M.D."/>
            <person name="Frankish A."/>
            <person name="Frankland J."/>
            <person name="French L."/>
            <person name="Garner P."/>
            <person name="Garnett J."/>
            <person name="Ghori M.J."/>
            <person name="Gilby L.M."/>
            <person name="Gillson C.J."/>
            <person name="Glithero R.J."/>
            <person name="Grafham D.V."/>
            <person name="Grant M."/>
            <person name="Gribble S."/>
            <person name="Griffiths C."/>
            <person name="Griffiths M.N.D."/>
            <person name="Hall R."/>
            <person name="Halls K.S."/>
            <person name="Hammond S."/>
            <person name="Harley J.L."/>
            <person name="Hart E.A."/>
            <person name="Heath P.D."/>
            <person name="Heathcott R."/>
            <person name="Holmes S.J."/>
            <person name="Howden P.J."/>
            <person name="Howe K.L."/>
            <person name="Howell G.R."/>
            <person name="Huckle E."/>
            <person name="Humphray S.J."/>
            <person name="Humphries M.D."/>
            <person name="Hunt A.R."/>
            <person name="Johnson C.M."/>
            <person name="Joy A.A."/>
            <person name="Kay M."/>
            <person name="Keenan S.J."/>
            <person name="Kimberley A.M."/>
            <person name="King A."/>
            <person name="Laird G.K."/>
            <person name="Langford C."/>
            <person name="Lawlor S."/>
            <person name="Leongamornlert D.A."/>
            <person name="Leversha M."/>
            <person name="Lloyd C.R."/>
            <person name="Lloyd D.M."/>
            <person name="Loveland J.E."/>
            <person name="Lovell J."/>
            <person name="Martin S."/>
            <person name="Mashreghi-Mohammadi M."/>
            <person name="Maslen G.L."/>
            <person name="Matthews L."/>
            <person name="McCann O.T."/>
            <person name="McLaren S.J."/>
            <person name="McLay K."/>
            <person name="McMurray A."/>
            <person name="Moore M.J.F."/>
            <person name="Mullikin J.C."/>
            <person name="Niblett D."/>
            <person name="Nickerson T."/>
            <person name="Novik K.L."/>
            <person name="Oliver K."/>
            <person name="Overton-Larty E.K."/>
            <person name="Parker A."/>
            <person name="Patel R."/>
            <person name="Pearce A.V."/>
            <person name="Peck A.I."/>
            <person name="Phillimore B.J.C.T."/>
            <person name="Phillips S."/>
            <person name="Plumb R.W."/>
            <person name="Porter K.M."/>
            <person name="Ramsey Y."/>
            <person name="Ranby S.A."/>
            <person name="Rice C.M."/>
            <person name="Ross M.T."/>
            <person name="Searle S.M."/>
            <person name="Sehra H.K."/>
            <person name="Sheridan E."/>
            <person name="Skuce C.D."/>
            <person name="Smith S."/>
            <person name="Smith M."/>
            <person name="Spraggon L."/>
            <person name="Squares S.L."/>
            <person name="Steward C.A."/>
            <person name="Sycamore N."/>
            <person name="Tamlyn-Hall G."/>
            <person name="Tester J."/>
            <person name="Theaker A.J."/>
            <person name="Thomas D.W."/>
            <person name="Thorpe A."/>
            <person name="Tracey A."/>
            <person name="Tromans A."/>
            <person name="Tubby B."/>
            <person name="Wall M."/>
            <person name="Wallis J.M."/>
            <person name="West A.P."/>
            <person name="White S.S."/>
            <person name="Whitehead S.L."/>
            <person name="Whittaker H."/>
            <person name="Wild A."/>
            <person name="Willey D.J."/>
            <person name="Wilmer T.E."/>
            <person name="Wood J.M."/>
            <person name="Wray P.W."/>
            <person name="Wyatt J.C."/>
            <person name="Young L."/>
            <person name="Younger R.M."/>
            <person name="Bentley D.R."/>
            <person name="Coulson A."/>
            <person name="Durbin R.M."/>
            <person name="Hubbard T."/>
            <person name="Sulston J.E."/>
            <person name="Dunham I."/>
            <person name="Rogers J."/>
            <person name="Beck S."/>
        </authorList>
    </citation>
    <scope>NUCLEOTIDE SEQUENCE [LARGE SCALE GENOMIC DNA]</scope>
</reference>
<reference key="3">
    <citation type="submission" date="2005-07" db="EMBL/GenBank/DDBJ databases">
        <authorList>
            <person name="Mural R.J."/>
            <person name="Istrail S."/>
            <person name="Sutton G.G."/>
            <person name="Florea L."/>
            <person name="Halpern A.L."/>
            <person name="Mobarry C.M."/>
            <person name="Lippert R."/>
            <person name="Walenz B."/>
            <person name="Shatkay H."/>
            <person name="Dew I."/>
            <person name="Miller J.R."/>
            <person name="Flanigan M.J."/>
            <person name="Edwards N.J."/>
            <person name="Bolanos R."/>
            <person name="Fasulo D."/>
            <person name="Halldorsson B.V."/>
            <person name="Hannenhalli S."/>
            <person name="Turner R."/>
            <person name="Yooseph S."/>
            <person name="Lu F."/>
            <person name="Nusskern D.R."/>
            <person name="Shue B.C."/>
            <person name="Zheng X.H."/>
            <person name="Zhong F."/>
            <person name="Delcher A.L."/>
            <person name="Huson D.H."/>
            <person name="Kravitz S.A."/>
            <person name="Mouchard L."/>
            <person name="Reinert K."/>
            <person name="Remington K.A."/>
            <person name="Clark A.G."/>
            <person name="Waterman M.S."/>
            <person name="Eichler E.E."/>
            <person name="Adams M.D."/>
            <person name="Hunkapiller M.W."/>
            <person name="Myers E.W."/>
            <person name="Venter J.C."/>
        </authorList>
    </citation>
    <scope>NUCLEOTIDE SEQUENCE [LARGE SCALE GENOMIC DNA]</scope>
    <scope>VARIANT ILE-156</scope>
</reference>
<reference key="4">
    <citation type="journal article" date="2004" name="Genome Res.">
        <title>The status, quality, and expansion of the NIH full-length cDNA project: the Mammalian Gene Collection (MGC).</title>
        <authorList>
            <consortium name="The MGC Project Team"/>
        </authorList>
    </citation>
    <scope>NUCLEOTIDE SEQUENCE [LARGE SCALE MRNA]</scope>
    <scope>VARIANT ILE-156</scope>
</reference>
<reference key="5">
    <citation type="journal article" date="2004" name="Gene">
        <title>A novel zebrafish kelchlike gene klhl and its human ortholog KLHL display conserved expression patterns in skeletal and cardiac muscles.</title>
        <authorList>
            <person name="Wu Y.L."/>
            <person name="Gong Z."/>
        </authorList>
    </citation>
    <scope>IDENTIFICATION</scope>
    <scope>TISSUE SPECIFICITY</scope>
</reference>
<name>KLH31_HUMAN</name>
<protein>
    <recommendedName>
        <fullName>Kelch-like protein 31</fullName>
    </recommendedName>
    <alternativeName>
        <fullName>BTB and kelch domain-containing protein 6</fullName>
    </alternativeName>
    <alternativeName>
        <fullName>Kelch repeat and BTB domain-containing protein 1</fullName>
    </alternativeName>
    <alternativeName>
        <fullName>Kelch-like protein KLHL</fullName>
    </alternativeName>
</protein>
<keyword id="KW-0880">Kelch repeat</keyword>
<keyword id="KW-0488">Methylation</keyword>
<keyword id="KW-1267">Proteomics identification</keyword>
<keyword id="KW-1185">Reference proteome</keyword>
<keyword id="KW-0677">Repeat</keyword>
<keyword id="KW-0678">Repressor</keyword>
<keyword id="KW-0804">Transcription</keyword>
<keyword id="KW-0805">Transcription regulation</keyword>
<accession>Q9H511</accession>
<accession>A6N9J2</accession>
<accession>B2RP49</accession>
<proteinExistence type="evidence at protein level"/>
<organism>
    <name type="scientific">Homo sapiens</name>
    <name type="common">Human</name>
    <dbReference type="NCBI Taxonomy" id="9606"/>
    <lineage>
        <taxon>Eukaryota</taxon>
        <taxon>Metazoa</taxon>
        <taxon>Chordata</taxon>
        <taxon>Craniata</taxon>
        <taxon>Vertebrata</taxon>
        <taxon>Euteleostomi</taxon>
        <taxon>Mammalia</taxon>
        <taxon>Eutheria</taxon>
        <taxon>Euarchontoglires</taxon>
        <taxon>Primates</taxon>
        <taxon>Haplorrhini</taxon>
        <taxon>Catarrhini</taxon>
        <taxon>Hominidae</taxon>
        <taxon>Homo</taxon>
    </lineage>
</organism>
<comment type="function">
    <text evidence="6">Transcriptional repressor in MAPK/JNK signaling pathway to regulate cellular functions. Overexpression inhibits the transcriptional activities of both the TPA-response element (TRE) and serum response element (SRE).</text>
</comment>
<comment type="tissue specificity">
    <text evidence="4 6">Strongly expressed in skeletal muscle and weakly in heart. According to PubMed:15302408, not expressed in other tissues. According to PubMed:18719355, abundantly expressed in both embryonic skeletal and heart tissues.</text>
</comment>
<comment type="PTM">
    <text evidence="1">N-terminus is methylated by METTL11A/NTM1.</text>
</comment>
<dbReference type="EMBL" id="EF633513">
    <property type="protein sequence ID" value="ABR23528.1"/>
    <property type="molecule type" value="mRNA"/>
</dbReference>
<dbReference type="EMBL" id="AL157773">
    <property type="status" value="NOT_ANNOTATED_CDS"/>
    <property type="molecule type" value="Genomic_DNA"/>
</dbReference>
<dbReference type="EMBL" id="CH471081">
    <property type="protein sequence ID" value="EAX04428.1"/>
    <property type="molecule type" value="Genomic_DNA"/>
</dbReference>
<dbReference type="EMBL" id="BC137267">
    <property type="protein sequence ID" value="AAI37268.1"/>
    <property type="molecule type" value="mRNA"/>
</dbReference>
<dbReference type="EMBL" id="BC137269">
    <property type="protein sequence ID" value="AAI37270.1"/>
    <property type="molecule type" value="mRNA"/>
</dbReference>
<dbReference type="CCDS" id="CCDS34478.1"/>
<dbReference type="RefSeq" id="NP_001003760.2">
    <property type="nucleotide sequence ID" value="NM_001003760.4"/>
</dbReference>
<dbReference type="RefSeq" id="XP_005249164.1">
    <property type="nucleotide sequence ID" value="XM_005249107.4"/>
</dbReference>
<dbReference type="RefSeq" id="XP_016866347.1">
    <property type="nucleotide sequence ID" value="XM_017010858.1"/>
</dbReference>
<dbReference type="SMR" id="Q9H511"/>
<dbReference type="ComplexPortal" id="CPX-8151">
    <property type="entry name" value="CRL3 E3 ubiquitin ligase complex, KLHL31 variant"/>
</dbReference>
<dbReference type="FunCoup" id="Q9H511">
    <property type="interactions" value="460"/>
</dbReference>
<dbReference type="IntAct" id="Q9H511">
    <property type="interactions" value="1"/>
</dbReference>
<dbReference type="STRING" id="9606.ENSP00000359942"/>
<dbReference type="GlyGen" id="Q9H511">
    <property type="glycosylation" value="1 site"/>
</dbReference>
<dbReference type="iPTMnet" id="Q9H511"/>
<dbReference type="PhosphoSitePlus" id="Q9H511"/>
<dbReference type="BioMuta" id="KLHL31"/>
<dbReference type="DMDM" id="74752656"/>
<dbReference type="MassIVE" id="Q9H511"/>
<dbReference type="PaxDb" id="9606-ENSP00000359942"/>
<dbReference type="PeptideAtlas" id="Q9H511"/>
<dbReference type="ProteomicsDB" id="80888"/>
<dbReference type="Antibodypedia" id="2404">
    <property type="antibodies" value="68 antibodies from 19 providers"/>
</dbReference>
<dbReference type="DNASU" id="401265"/>
<dbReference type="Ensembl" id="ENST00000370905.4">
    <property type="protein sequence ID" value="ENSP00000359942.3"/>
    <property type="gene ID" value="ENSG00000124743.6"/>
</dbReference>
<dbReference type="Ensembl" id="ENST00000407079.1">
    <property type="protein sequence ID" value="ENSP00000384644.1"/>
    <property type="gene ID" value="ENSG00000124743.6"/>
</dbReference>
<dbReference type="GeneID" id="401265"/>
<dbReference type="KEGG" id="hsa:401265"/>
<dbReference type="MANE-Select" id="ENST00000370905.4">
    <property type="protein sequence ID" value="ENSP00000359942.3"/>
    <property type="RefSeq nucleotide sequence ID" value="NM_001003760.5"/>
    <property type="RefSeq protein sequence ID" value="NP_001003760.2"/>
</dbReference>
<dbReference type="UCSC" id="uc003pcb.4">
    <property type="organism name" value="human"/>
</dbReference>
<dbReference type="AGR" id="HGNC:21353"/>
<dbReference type="CTD" id="401265"/>
<dbReference type="GeneCards" id="KLHL31"/>
<dbReference type="HGNC" id="HGNC:21353">
    <property type="gene designation" value="KLHL31"/>
</dbReference>
<dbReference type="HPA" id="ENSG00000124743">
    <property type="expression patterns" value="Tissue enhanced (heart muscle, skeletal muscle, tongue)"/>
</dbReference>
<dbReference type="MIM" id="610749">
    <property type="type" value="gene"/>
</dbReference>
<dbReference type="neXtProt" id="NX_Q9H511"/>
<dbReference type="OpenTargets" id="ENSG00000124743"/>
<dbReference type="PharmGKB" id="PA162393541"/>
<dbReference type="VEuPathDB" id="HostDB:ENSG00000124743"/>
<dbReference type="eggNOG" id="KOG4441">
    <property type="taxonomic scope" value="Eukaryota"/>
</dbReference>
<dbReference type="GeneTree" id="ENSGT00940000158352"/>
<dbReference type="HOGENOM" id="CLU_004253_14_3_1"/>
<dbReference type="InParanoid" id="Q9H511"/>
<dbReference type="OMA" id="FNSWIHL"/>
<dbReference type="OrthoDB" id="6678352at2759"/>
<dbReference type="PAN-GO" id="Q9H511">
    <property type="GO annotations" value="3 GO annotations based on evolutionary models"/>
</dbReference>
<dbReference type="PhylomeDB" id="Q9H511"/>
<dbReference type="TreeFam" id="TF328485"/>
<dbReference type="PathwayCommons" id="Q9H511"/>
<dbReference type="SignaLink" id="Q9H511"/>
<dbReference type="BioGRID-ORCS" id="401265">
    <property type="hits" value="13 hits in 1187 CRISPR screens"/>
</dbReference>
<dbReference type="ChiTaRS" id="KLHL31">
    <property type="organism name" value="human"/>
</dbReference>
<dbReference type="GenomeRNAi" id="401265"/>
<dbReference type="Pharos" id="Q9H511">
    <property type="development level" value="Tbio"/>
</dbReference>
<dbReference type="PRO" id="PR:Q9H511"/>
<dbReference type="Proteomes" id="UP000005640">
    <property type="component" value="Chromosome 6"/>
</dbReference>
<dbReference type="RNAct" id="Q9H511">
    <property type="molecule type" value="protein"/>
</dbReference>
<dbReference type="Bgee" id="ENSG00000124743">
    <property type="expression patterns" value="Expressed in left ventricle myocardium and 112 other cell types or tissues"/>
</dbReference>
<dbReference type="GO" id="GO:0005737">
    <property type="term" value="C:cytoplasm"/>
    <property type="evidence" value="ECO:0000314"/>
    <property type="project" value="UniProtKB"/>
</dbReference>
<dbReference type="GO" id="GO:0005634">
    <property type="term" value="C:nucleus"/>
    <property type="evidence" value="ECO:0000314"/>
    <property type="project" value="UniProtKB"/>
</dbReference>
<dbReference type="GO" id="GO:0046329">
    <property type="term" value="P:negative regulation of JNK cascade"/>
    <property type="evidence" value="ECO:0000315"/>
    <property type="project" value="UniProtKB"/>
</dbReference>
<dbReference type="GO" id="GO:0001933">
    <property type="term" value="P:negative regulation of protein phosphorylation"/>
    <property type="evidence" value="ECO:0000315"/>
    <property type="project" value="UniProtKB"/>
</dbReference>
<dbReference type="CDD" id="cd18470">
    <property type="entry name" value="BACK_KLHL31_KBTBD1"/>
    <property type="match status" value="1"/>
</dbReference>
<dbReference type="CDD" id="cd18260">
    <property type="entry name" value="BTB_POZ_KLHL31_KBTBD1"/>
    <property type="match status" value="1"/>
</dbReference>
<dbReference type="FunFam" id="1.25.40.420:FF:000015">
    <property type="entry name" value="Kelch-like family member 31"/>
    <property type="match status" value="1"/>
</dbReference>
<dbReference type="FunFam" id="2.120.10.80:FF:000064">
    <property type="entry name" value="Kelch-like family member 31"/>
    <property type="match status" value="1"/>
</dbReference>
<dbReference type="FunFam" id="3.30.710.10:FF:000098">
    <property type="entry name" value="Kelch-like family member 31"/>
    <property type="match status" value="1"/>
</dbReference>
<dbReference type="Gene3D" id="1.25.40.420">
    <property type="match status" value="1"/>
</dbReference>
<dbReference type="Gene3D" id="2.120.10.80">
    <property type="entry name" value="Kelch-type beta propeller"/>
    <property type="match status" value="1"/>
</dbReference>
<dbReference type="Gene3D" id="3.30.710.10">
    <property type="entry name" value="Potassium Channel Kv1.1, Chain A"/>
    <property type="match status" value="1"/>
</dbReference>
<dbReference type="InterPro" id="IPR011705">
    <property type="entry name" value="BACK"/>
</dbReference>
<dbReference type="InterPro" id="IPR017096">
    <property type="entry name" value="BTB-kelch_protein"/>
</dbReference>
<dbReference type="InterPro" id="IPR000210">
    <property type="entry name" value="BTB/POZ_dom"/>
</dbReference>
<dbReference type="InterPro" id="IPR030604">
    <property type="entry name" value="BTB_POZ_KLHL31"/>
</dbReference>
<dbReference type="InterPro" id="IPR015915">
    <property type="entry name" value="Kelch-typ_b-propeller"/>
</dbReference>
<dbReference type="InterPro" id="IPR006652">
    <property type="entry name" value="Kelch_1"/>
</dbReference>
<dbReference type="InterPro" id="IPR011333">
    <property type="entry name" value="SKP1/BTB/POZ_sf"/>
</dbReference>
<dbReference type="PANTHER" id="PTHR45632:SF17">
    <property type="entry name" value="KELCH-LIKE PROTEIN 31"/>
    <property type="match status" value="1"/>
</dbReference>
<dbReference type="PANTHER" id="PTHR45632">
    <property type="entry name" value="LD33804P"/>
    <property type="match status" value="1"/>
</dbReference>
<dbReference type="Pfam" id="PF07707">
    <property type="entry name" value="BACK"/>
    <property type="match status" value="1"/>
</dbReference>
<dbReference type="Pfam" id="PF00651">
    <property type="entry name" value="BTB"/>
    <property type="match status" value="1"/>
</dbReference>
<dbReference type="Pfam" id="PF01344">
    <property type="entry name" value="Kelch_1"/>
    <property type="match status" value="1"/>
</dbReference>
<dbReference type="Pfam" id="PF24681">
    <property type="entry name" value="Kelch_KLHDC2_KLHL20_DRC7"/>
    <property type="match status" value="1"/>
</dbReference>
<dbReference type="PIRSF" id="PIRSF037037">
    <property type="entry name" value="Kelch-like_protein_gigaxonin"/>
    <property type="match status" value="1"/>
</dbReference>
<dbReference type="SMART" id="SM00875">
    <property type="entry name" value="BACK"/>
    <property type="match status" value="1"/>
</dbReference>
<dbReference type="SMART" id="SM00225">
    <property type="entry name" value="BTB"/>
    <property type="match status" value="1"/>
</dbReference>
<dbReference type="SMART" id="SM00612">
    <property type="entry name" value="Kelch"/>
    <property type="match status" value="6"/>
</dbReference>
<dbReference type="SUPFAM" id="SSF117281">
    <property type="entry name" value="Kelch motif"/>
    <property type="match status" value="1"/>
</dbReference>
<dbReference type="SUPFAM" id="SSF54695">
    <property type="entry name" value="POZ domain"/>
    <property type="match status" value="1"/>
</dbReference>
<dbReference type="PROSITE" id="PS50097">
    <property type="entry name" value="BTB"/>
    <property type="match status" value="1"/>
</dbReference>
<evidence type="ECO:0000250" key="1"/>
<evidence type="ECO:0000250" key="2">
    <source>
        <dbReference type="UniProtKB" id="Q8BWA5"/>
    </source>
</evidence>
<evidence type="ECO:0000255" key="3">
    <source>
        <dbReference type="PROSITE-ProRule" id="PRU00037"/>
    </source>
</evidence>
<evidence type="ECO:0000269" key="4">
    <source>
    </source>
</evidence>
<evidence type="ECO:0000269" key="5">
    <source>
    </source>
</evidence>
<evidence type="ECO:0000269" key="6">
    <source>
    </source>
</evidence>
<evidence type="ECO:0000269" key="7">
    <source ref="3"/>
</evidence>
<gene>
    <name type="primary">KLHL31</name>
    <name type="synonym">BKLHD6</name>
    <name type="synonym">KBTBD1</name>
    <name type="synonym">KLHL</name>
</gene>
<sequence>MAPKKKIVKKNKGDINEMTIIVEDSPLNKLNALNGLLEGGNGLSCISSELTDASYGPNLLEGLSKMRQENFLCDLVIGTKTKSFDVHKSVMASCSEYFYNILKKDPSIQRVDLNDISPLGLATVIAYAYTGKLTLSLYTIGSIISAAVYLQIHTLVKMCSDFLIREMSVENCMYVVNIAETYSLKNAKAAAQKFIRDNFLEFAESDQFMKLTFEQINELLIDDDLQLPSEIVAFQIAMKWLEFDQKRVKYAADLLSNIRFGTISAQDLVNYVQSVPRMMQDADCHRLLVDAMNYHLLPYHQNTLQSRRTRIRGGCRVLVTVGGRPGLTEKSLSRDILYRDPENGWSKLTEMPAKSFNQCVAVMDGFLYVAGGEDQNDARNQAKHAVSNFCRYDPRFNTWIHLASMNQKRTHFSLSVFNGLVYAAGGRNAEGSLASLECYVPSTNQWQPKTPLEVARCCHASAVADGRVLVTGGYIANAYSRSVCAYDPASDSWQELPNLSTPRGWHCAVTLSDRVYVMGGSQLGPRGERVDVLTVECYSPATGQWSYAAPLQVGVSTAGVSALHGRAYLVGGWNEGEKKYKKCIQCFSPELNEWTEDDELPEATVGVSCCTLSMPNNVTRESRASSVSSVPVSI</sequence>